<accession>P10174</accession>
<accession>D6W082</accession>
<sequence length="60" mass="6932">MANKVIQLQKIFQSSTKPLWWRHPRSALYLYPFYAIFAVAVVTPLLYIPNAIRGIKAKKA</sequence>
<keyword id="KW-0002">3D-structure</keyword>
<keyword id="KW-0903">Direct protein sequencing</keyword>
<keyword id="KW-0472">Membrane</keyword>
<keyword id="KW-0496">Mitochondrion</keyword>
<keyword id="KW-0999">Mitochondrion inner membrane</keyword>
<keyword id="KW-0560">Oxidoreductase</keyword>
<keyword id="KW-1185">Reference proteome</keyword>
<keyword id="KW-0812">Transmembrane</keyword>
<keyword id="KW-1133">Transmembrane helix</keyword>
<proteinExistence type="evidence at protein level"/>
<organism>
    <name type="scientific">Saccharomyces cerevisiae (strain ATCC 204508 / S288c)</name>
    <name type="common">Baker's yeast</name>
    <dbReference type="NCBI Taxonomy" id="559292"/>
    <lineage>
        <taxon>Eukaryota</taxon>
        <taxon>Fungi</taxon>
        <taxon>Dikarya</taxon>
        <taxon>Ascomycota</taxon>
        <taxon>Saccharomycotina</taxon>
        <taxon>Saccharomycetes</taxon>
        <taxon>Saccharomycetales</taxon>
        <taxon>Saccharomycetaceae</taxon>
        <taxon>Saccharomyces</taxon>
    </lineage>
</organism>
<dbReference type="EMBL" id="X51506">
    <property type="protein sequence ID" value="CAA35871.1"/>
    <property type="molecule type" value="Genomic_DNA"/>
</dbReference>
<dbReference type="EMBL" id="M31620">
    <property type="protein sequence ID" value="AAA34550.1"/>
    <property type="molecule type" value="Genomic_DNA"/>
</dbReference>
<dbReference type="EMBL" id="Z48639">
    <property type="protein sequence ID" value="CAA88583.1"/>
    <property type="molecule type" value="Genomic_DNA"/>
</dbReference>
<dbReference type="EMBL" id="AY558129">
    <property type="protein sequence ID" value="AAS56455.1"/>
    <property type="molecule type" value="Genomic_DNA"/>
</dbReference>
<dbReference type="EMBL" id="BK006946">
    <property type="protein sequence ID" value="DAA10156.1"/>
    <property type="molecule type" value="Genomic_DNA"/>
</dbReference>
<dbReference type="PIR" id="S22248">
    <property type="entry name" value="OBBY7"/>
</dbReference>
<dbReference type="RefSeq" id="NP_013983.1">
    <property type="nucleotide sequence ID" value="NM_001182763.1"/>
</dbReference>
<dbReference type="PDB" id="6GIQ">
    <property type="method" value="EM"/>
    <property type="resolution" value="3.23 A"/>
    <property type="chains" value="g=1-60"/>
</dbReference>
<dbReference type="PDB" id="6HU9">
    <property type="method" value="EM"/>
    <property type="resolution" value="3.35 A"/>
    <property type="chains" value="g/s=2-60"/>
</dbReference>
<dbReference type="PDB" id="6T0B">
    <property type="method" value="EM"/>
    <property type="resolution" value="2.80 A"/>
    <property type="chains" value="g/t=2-60"/>
</dbReference>
<dbReference type="PDB" id="6T15">
    <property type="method" value="EM"/>
    <property type="resolution" value="3.29 A"/>
    <property type="chains" value="g=2-60"/>
</dbReference>
<dbReference type="PDB" id="6YMX">
    <property type="method" value="EM"/>
    <property type="resolution" value="3.17 A"/>
    <property type="chains" value="g=3-57"/>
</dbReference>
<dbReference type="PDB" id="6YMY">
    <property type="method" value="EM"/>
    <property type="resolution" value="3.41 A"/>
    <property type="chains" value="g=3-57"/>
</dbReference>
<dbReference type="PDB" id="7Z10">
    <property type="method" value="EM"/>
    <property type="resolution" value="3.87 A"/>
    <property type="chains" value="g=2-60"/>
</dbReference>
<dbReference type="PDB" id="8DH6">
    <property type="method" value="EM"/>
    <property type="resolution" value="2.94 A"/>
    <property type="chains" value="g=2-60"/>
</dbReference>
<dbReference type="PDB" id="8E7S">
    <property type="method" value="EM"/>
    <property type="resolution" value="3.20 A"/>
    <property type="chains" value="N/n=1-60"/>
</dbReference>
<dbReference type="PDB" id="8EC0">
    <property type="method" value="EM"/>
    <property type="resolution" value="3.30 A"/>
    <property type="chains" value="N=1-60"/>
</dbReference>
<dbReference type="PDB" id="9ETZ">
    <property type="method" value="EM"/>
    <property type="resolution" value="2.40 A"/>
    <property type="chains" value="g=2-60"/>
</dbReference>
<dbReference type="PDBsum" id="6GIQ"/>
<dbReference type="PDBsum" id="6HU9"/>
<dbReference type="PDBsum" id="6T0B"/>
<dbReference type="PDBsum" id="6T15"/>
<dbReference type="PDBsum" id="6YMX"/>
<dbReference type="PDBsum" id="6YMY"/>
<dbReference type="PDBsum" id="7Z10"/>
<dbReference type="PDBsum" id="8DH6"/>
<dbReference type="PDBsum" id="8E7S"/>
<dbReference type="PDBsum" id="8EC0"/>
<dbReference type="PDBsum" id="9ETZ"/>
<dbReference type="EMDB" id="EMD-10847"/>
<dbReference type="EMDB" id="EMD-10848"/>
<dbReference type="EMDB" id="EMD-14436"/>
<dbReference type="EMDB" id="EMD-19963"/>
<dbReference type="EMDB" id="EMD-27430"/>
<dbReference type="EMDB" id="EMD-27940"/>
<dbReference type="EMDB" id="EMD-28011"/>
<dbReference type="SMR" id="P10174"/>
<dbReference type="BioGRID" id="35434">
    <property type="interactions" value="326"/>
</dbReference>
<dbReference type="ComplexPortal" id="CPX-1721">
    <property type="entry name" value="Mitochondrial respiratory chain complex IV, COX5A variant"/>
</dbReference>
<dbReference type="ComplexPortal" id="CPX-1722">
    <property type="entry name" value="Mitochondrial respiratory chain complex IV, COX5B variant"/>
</dbReference>
<dbReference type="DIP" id="DIP-7133N"/>
<dbReference type="FunCoup" id="P10174">
    <property type="interactions" value="173"/>
</dbReference>
<dbReference type="IntAct" id="P10174">
    <property type="interactions" value="9"/>
</dbReference>
<dbReference type="MINT" id="P10174"/>
<dbReference type="STRING" id="4932.YMR256C"/>
<dbReference type="TCDB" id="3.D.4.8.1">
    <property type="family name" value="the proton-translocating cytochrome oxidase (cox) superfamily"/>
</dbReference>
<dbReference type="PaxDb" id="4932-YMR256C"/>
<dbReference type="PeptideAtlas" id="P10174"/>
<dbReference type="EnsemblFungi" id="YMR256C_mRNA">
    <property type="protein sequence ID" value="YMR256C"/>
    <property type="gene ID" value="YMR256C"/>
</dbReference>
<dbReference type="GeneID" id="855298"/>
<dbReference type="KEGG" id="sce:YMR256C"/>
<dbReference type="AGR" id="SGD:S000004869"/>
<dbReference type="SGD" id="S000004869">
    <property type="gene designation" value="COX7"/>
</dbReference>
<dbReference type="VEuPathDB" id="FungiDB:YMR256C"/>
<dbReference type="eggNOG" id="ENOG502S7M1">
    <property type="taxonomic scope" value="Eukaryota"/>
</dbReference>
<dbReference type="HOGENOM" id="CLU_169147_2_1_1"/>
<dbReference type="InParanoid" id="P10174"/>
<dbReference type="OMA" id="WWRHPRS"/>
<dbReference type="OrthoDB" id="5511599at2759"/>
<dbReference type="BioCyc" id="MetaCyc:YMR256C-MONOMER"/>
<dbReference type="BioCyc" id="YEAST:YMR256C-MONOMER"/>
<dbReference type="UniPathway" id="UPA00705"/>
<dbReference type="BioGRID-ORCS" id="855298">
    <property type="hits" value="2 hits in 10 CRISPR screens"/>
</dbReference>
<dbReference type="PRO" id="PR:P10174"/>
<dbReference type="Proteomes" id="UP000002311">
    <property type="component" value="Chromosome XIII"/>
</dbReference>
<dbReference type="RNAct" id="P10174">
    <property type="molecule type" value="protein"/>
</dbReference>
<dbReference type="GO" id="GO:0005743">
    <property type="term" value="C:mitochondrial inner membrane"/>
    <property type="evidence" value="ECO:0007669"/>
    <property type="project" value="UniProtKB-SubCell"/>
</dbReference>
<dbReference type="GO" id="GO:0031966">
    <property type="term" value="C:mitochondrial membrane"/>
    <property type="evidence" value="ECO:0000314"/>
    <property type="project" value="ComplexPortal"/>
</dbReference>
<dbReference type="GO" id="GO:0005739">
    <property type="term" value="C:mitochondrion"/>
    <property type="evidence" value="ECO:0007005"/>
    <property type="project" value="SGD"/>
</dbReference>
<dbReference type="GO" id="GO:0045277">
    <property type="term" value="C:respiratory chain complex IV"/>
    <property type="evidence" value="ECO:0000314"/>
    <property type="project" value="SGD"/>
</dbReference>
<dbReference type="GO" id="GO:0016491">
    <property type="term" value="F:oxidoreductase activity"/>
    <property type="evidence" value="ECO:0007669"/>
    <property type="project" value="UniProtKB-KW"/>
</dbReference>
<dbReference type="GO" id="GO:0045333">
    <property type="term" value="P:cellular respiration"/>
    <property type="evidence" value="ECO:0000314"/>
    <property type="project" value="ComplexPortal"/>
</dbReference>
<dbReference type="GO" id="GO:0006123">
    <property type="term" value="P:mitochondrial electron transport, cytochrome c to oxygen"/>
    <property type="evidence" value="ECO:0000314"/>
    <property type="project" value="SGD"/>
</dbReference>
<dbReference type="GO" id="GO:1902600">
    <property type="term" value="P:proton transmembrane transport"/>
    <property type="evidence" value="ECO:0007669"/>
    <property type="project" value="GOC"/>
</dbReference>
<dbReference type="InterPro" id="IPR014367">
    <property type="entry name" value="Cox7_yeast"/>
</dbReference>
<dbReference type="InterPro" id="IPR039297">
    <property type="entry name" value="COX7a"/>
</dbReference>
<dbReference type="Pfam" id="PF02238">
    <property type="entry name" value="COX7a"/>
    <property type="match status" value="1"/>
</dbReference>
<dbReference type="PIRSF" id="PIRSF000282">
    <property type="entry name" value="COX7"/>
    <property type="match status" value="1"/>
</dbReference>
<name>COX7_YEAST</name>
<reference key="1">
    <citation type="journal article" date="1990" name="J. Biol. Chem.">
        <title>Yeast cytochrome c oxidase subunit VII is essential for assembly of an active enzyme. Cloning, sequencing, and characterization of the nuclear-encoded gene.</title>
        <authorList>
            <person name="Aggeler R."/>
            <person name="Capaldi R.A."/>
        </authorList>
    </citation>
    <scope>NUCLEOTIDE SEQUENCE [GENOMIC DNA]</scope>
</reference>
<reference key="2">
    <citation type="journal article" date="1990" name="Nucleic Acids Res.">
        <title>Nucleotide sequence of the gene encoding cytochrome c oxidase subunit VII from Saccharomyces cerevisiae.</title>
        <authorList>
            <person name="Calder K.M."/>
            <person name="McEwen J.E."/>
        </authorList>
    </citation>
    <scope>NUCLEOTIDE SEQUENCE [GENOMIC DNA]</scope>
    <source>
        <strain>ATCC 204510 / AB320</strain>
    </source>
</reference>
<reference key="3">
    <citation type="journal article" date="1997" name="Nature">
        <title>The nucleotide sequence of Saccharomyces cerevisiae chromosome XIII.</title>
        <authorList>
            <person name="Bowman S."/>
            <person name="Churcher C.M."/>
            <person name="Badcock K."/>
            <person name="Brown D."/>
            <person name="Chillingworth T."/>
            <person name="Connor R."/>
            <person name="Dedman K."/>
            <person name="Devlin K."/>
            <person name="Gentles S."/>
            <person name="Hamlin N."/>
            <person name="Hunt S."/>
            <person name="Jagels K."/>
            <person name="Lye G."/>
            <person name="Moule S."/>
            <person name="Odell C."/>
            <person name="Pearson D."/>
            <person name="Rajandream M.A."/>
            <person name="Rice P."/>
            <person name="Skelton J."/>
            <person name="Walsh S.V."/>
            <person name="Whitehead S."/>
            <person name="Barrell B.G."/>
        </authorList>
    </citation>
    <scope>NUCLEOTIDE SEQUENCE [LARGE SCALE GENOMIC DNA]</scope>
    <source>
        <strain>ATCC 204508 / S288c</strain>
    </source>
</reference>
<reference key="4">
    <citation type="journal article" date="2014" name="G3 (Bethesda)">
        <title>The reference genome sequence of Saccharomyces cerevisiae: Then and now.</title>
        <authorList>
            <person name="Engel S.R."/>
            <person name="Dietrich F.S."/>
            <person name="Fisk D.G."/>
            <person name="Binkley G."/>
            <person name="Balakrishnan R."/>
            <person name="Costanzo M.C."/>
            <person name="Dwight S.S."/>
            <person name="Hitz B.C."/>
            <person name="Karra K."/>
            <person name="Nash R.S."/>
            <person name="Weng S."/>
            <person name="Wong E.D."/>
            <person name="Lloyd P."/>
            <person name="Skrzypek M.S."/>
            <person name="Miyasato S.R."/>
            <person name="Simison M."/>
            <person name="Cherry J.M."/>
        </authorList>
    </citation>
    <scope>GENOME REANNOTATION</scope>
    <source>
        <strain>ATCC 204508 / S288c</strain>
    </source>
</reference>
<reference key="5">
    <citation type="journal article" date="2007" name="Genome Res.">
        <title>Approaching a complete repository of sequence-verified protein-encoding clones for Saccharomyces cerevisiae.</title>
        <authorList>
            <person name="Hu Y."/>
            <person name="Rolfs A."/>
            <person name="Bhullar B."/>
            <person name="Murthy T.V.S."/>
            <person name="Zhu C."/>
            <person name="Berger M.F."/>
            <person name="Camargo A.A."/>
            <person name="Kelley F."/>
            <person name="McCarron S."/>
            <person name="Jepson D."/>
            <person name="Richardson A."/>
            <person name="Raphael J."/>
            <person name="Moreira D."/>
            <person name="Taycher E."/>
            <person name="Zuo D."/>
            <person name="Mohr S."/>
            <person name="Kane M.F."/>
            <person name="Williamson J."/>
            <person name="Simpson A.J.G."/>
            <person name="Bulyk M.L."/>
            <person name="Harlow E."/>
            <person name="Marsischky G."/>
            <person name="Kolodner R.D."/>
            <person name="LaBaer J."/>
        </authorList>
    </citation>
    <scope>NUCLEOTIDE SEQUENCE [GENOMIC DNA]</scope>
    <source>
        <strain>ATCC 204508 / S288c</strain>
    </source>
</reference>
<reference key="6">
    <citation type="journal article" date="1986" name="J. Biol. Chem.">
        <title>The nuclear-coded subunits of yeast cytochrome c oxidase. The amino acid sequences of subunits VII and VIIa, structural similarities between the three smallest polypeptides of the holoenzyme, and implications for biogenesis.</title>
        <authorList>
            <person name="Power S.D."/>
            <person name="Lochrie M.A."/>
            <person name="Poyton R.O."/>
        </authorList>
    </citation>
    <scope>PROTEIN SEQUENCE OF 2-58</scope>
</reference>
<reference key="7">
    <citation type="journal article" date="1995" name="Eur. J. Biochem.">
        <title>Kinetic properties and ligand binding of the eleven-subunit cytochrome-c oxidase from Saccharomyces cerevisiae isolated with a novel large-scale purification method.</title>
        <authorList>
            <person name="Geier B.M."/>
            <person name="Schagger H."/>
            <person name="Ortwein C."/>
            <person name="Link T.A."/>
            <person name="Hagen W.R."/>
            <person name="Brandt U."/>
            <person name="Von Jagow G."/>
        </authorList>
    </citation>
    <scope>PROTEIN SEQUENCE OF 2-4</scope>
    <scope>COMPOSITION OF THE CYTOCHROME C OXIDASE COMPLEX</scope>
</reference>
<reference key="8">
    <citation type="journal article" date="2000" name="EMBO J.">
        <title>Supercomplexes in the respiratory chains of yeast and mammalian mitochondria.</title>
        <authorList>
            <person name="Schaegger H."/>
            <person name="Pfeiffer K."/>
        </authorList>
    </citation>
    <scope>FORMATION OF CYTOCHROME BC1-CYTOCHROME C OXIDASE SUPERCOMPLEX</scope>
</reference>
<reference key="9">
    <citation type="journal article" date="2000" name="J. Biol. Chem.">
        <title>The cytochrome bc1 and cytochrome c oxidase complexes associate to form a single supracomplex in yeast mitochondria.</title>
        <authorList>
            <person name="Cruciat C.M."/>
            <person name="Brunner S."/>
            <person name="Baumann F."/>
            <person name="Neupert W."/>
            <person name="Stuart R.A."/>
        </authorList>
    </citation>
    <scope>FORMATION OF CYTOCHROME BC1-CYTOCHROME C OXIDASE SUPERCOMPLEX</scope>
</reference>
<reference key="10">
    <citation type="journal article" date="2003" name="Nature">
        <title>Global analysis of protein expression in yeast.</title>
        <authorList>
            <person name="Ghaemmaghami S."/>
            <person name="Huh W.-K."/>
            <person name="Bower K."/>
            <person name="Howson R.W."/>
            <person name="Belle A."/>
            <person name="Dephoure N."/>
            <person name="O'Shea E.K."/>
            <person name="Weissman J.S."/>
        </authorList>
    </citation>
    <scope>LEVEL OF PROTEIN EXPRESSION [LARGE SCALE ANALYSIS]</scope>
</reference>
<reference key="11">
    <citation type="journal article" date="2019" name="Nat. Struct. Mol. Biol.">
        <title>Cryo-EM structure of the yeast respiratory supercomplex.</title>
        <authorList>
            <person name="Rathore S."/>
            <person name="Berndtsson J."/>
            <person name="Marin-Buera L."/>
            <person name="Conrad J."/>
            <person name="Carroni M."/>
            <person name="Brzezinski P."/>
            <person name="Ott M."/>
        </authorList>
    </citation>
    <scope>STRUCTURE BY ELECTRON MICROSCOPY (3.23 ANGSTROMS)</scope>
</reference>
<reference key="12">
    <citation type="journal article" date="2019" name="Nat. Struct. Mol. Biol.">
        <title>Structure of yeast cytochrome c oxidase in a supercomplex with cytochrome bc1.</title>
        <authorList>
            <person name="Hartley A.M."/>
            <person name="Lukoyanova N."/>
            <person name="Zhang Y."/>
            <person name="Cabrera-Orefice A."/>
            <person name="Arnold S."/>
            <person name="Meunier B."/>
            <person name="Pinotsis N."/>
            <person name="Marechal A."/>
        </authorList>
    </citation>
    <scope>STRUCTURE BY ELECTRON MICROSCOPY (3.35 ANGSTROMS)</scope>
    <scope>FUNCTION</scope>
</reference>
<feature type="initiator methionine" description="Removed" evidence="4 7">
    <location>
        <position position="1"/>
    </location>
</feature>
<feature type="chain" id="PRO_0000183907" description="Cytochrome c oxidase subunit 7, mitochondrial">
    <location>
        <begin position="2"/>
        <end position="60"/>
    </location>
</feature>
<feature type="topological domain" description="Mitochondrial matrix" evidence="5">
    <location>
        <begin position="2"/>
        <end position="29"/>
    </location>
</feature>
<feature type="transmembrane region" description="Helical" evidence="5">
    <location>
        <begin position="30"/>
        <end position="53"/>
    </location>
</feature>
<feature type="topological domain" description="Mitochondrial intermembrane" evidence="5">
    <location>
        <begin position="54"/>
        <end position="60"/>
    </location>
</feature>
<feature type="helix" evidence="10">
    <location>
        <begin position="5"/>
        <end position="13"/>
    </location>
</feature>
<feature type="helix" evidence="10">
    <location>
        <begin position="19"/>
        <end position="21"/>
    </location>
</feature>
<feature type="turn" evidence="10">
    <location>
        <begin position="24"/>
        <end position="26"/>
    </location>
</feature>
<feature type="helix" evidence="10">
    <location>
        <begin position="27"/>
        <end position="45"/>
    </location>
</feature>
<feature type="helix" evidence="10">
    <location>
        <begin position="48"/>
        <end position="53"/>
    </location>
</feature>
<protein>
    <recommendedName>
        <fullName>Cytochrome c oxidase subunit 7, mitochondrial</fullName>
    </recommendedName>
    <alternativeName>
        <fullName>Cytochrome c oxidase polypeptide VII</fullName>
    </alternativeName>
</protein>
<gene>
    <name type="primary">COX7</name>
    <name type="ordered locus">YMR256C</name>
    <name type="ORF">YM9920.10C</name>
</gene>
<comment type="function">
    <text evidence="9">Component of the cytochrome c oxidase, the last enzyme in the mitochondrial electron transport chain which drives oxidative phosphorylation. The respiratory chain contains 3 multisubunit complexes succinate dehydrogenase (complex II, CII), ubiquinol-cytochrome c oxidoreductase (cytochrome b-c1 complex, complex III, CIII) and cytochrome c oxidase (complex IV, CIV), that cooperate to transfer electrons derived from NADH and succinate to molecular oxygen, creating an electrochemical gradient over the inner membrane that drives transmembrane transport and the ATP synthase. Cytochrome c oxidase is the component of the respiratory chain that catalyzes the reduction of oxygen to water. Electrons originating from reduced cytochrome c in the intermembrane space (IMS) are transferred via the dinuclear copper A center (CU(A)) of COX2 and heme A of COX1 to the active site in COX1, a binuclear center (BNC) formed by heme A3 and copper B (CU(B)). The BNC reduces molecular oxygen to 2 water molecules using 4 electrons from cytochrome c in the IMS and 4 protons from the mitochondrial matrix.</text>
</comment>
<comment type="pathway">
    <text>Energy metabolism; oxidative phosphorylation.</text>
</comment>
<comment type="subunit">
    <text evidence="1 2 5 6 7">Component of the cytochrome c oxidase (complex IV, CIV), a multisubunit enzyme composed of 12 subunits. The complex is composed of a catalytic core of 3 subunits COX1, COX2 and COX3, encoded in the mitochondrial DNA, and 9 supernumerary subunits COX4, COX5A (or COX5B), COX6, COX7, COX8, COX9, COX12, COX13 and COX26, which are encoded in the nuclear genome (PubMed:30598554, PubMed:30598556, PubMed:7851399). The complex exists as a monomer or a dimer and forms supercomplexes (SCs) in the inner mitochondrial membrane with a dimer of ubiquinol-cytochrome c oxidoreductase (cytochrome b-c1 complex, complex III, CIII), resulting in 2 different assemblies (supercomplexes III(2)IV and III(2)IV(2)) (PubMed:10764779, PubMed:10775262, PubMed:30598554, PubMed:30598556).</text>
</comment>
<comment type="subcellular location">
    <subcellularLocation>
        <location evidence="5">Mitochondrion inner membrane</location>
        <topology evidence="5">Single-pass membrane protein</topology>
    </subcellularLocation>
</comment>
<comment type="miscellaneous">
    <text evidence="3">Present with 639 molecules/cell in log phase SD medium.</text>
</comment>
<comment type="similarity">
    <text evidence="8">Belongs to the cytochrome c oxidase VIIa family.</text>
</comment>
<evidence type="ECO:0000269" key="1">
    <source>
    </source>
</evidence>
<evidence type="ECO:0000269" key="2">
    <source>
    </source>
</evidence>
<evidence type="ECO:0000269" key="3">
    <source>
    </source>
</evidence>
<evidence type="ECO:0000269" key="4">
    <source>
    </source>
</evidence>
<evidence type="ECO:0000269" key="5">
    <source>
    </source>
</evidence>
<evidence type="ECO:0000269" key="6">
    <source>
    </source>
</evidence>
<evidence type="ECO:0000269" key="7">
    <source>
    </source>
</evidence>
<evidence type="ECO:0000305" key="8"/>
<evidence type="ECO:0000305" key="9">
    <source>
    </source>
</evidence>
<evidence type="ECO:0007829" key="10">
    <source>
        <dbReference type="PDB" id="9ETZ"/>
    </source>
</evidence>